<organism>
    <name type="scientific">Geobacillus thermodenitrificans (strain NG80-2)</name>
    <dbReference type="NCBI Taxonomy" id="420246"/>
    <lineage>
        <taxon>Bacteria</taxon>
        <taxon>Bacillati</taxon>
        <taxon>Bacillota</taxon>
        <taxon>Bacilli</taxon>
        <taxon>Bacillales</taxon>
        <taxon>Anoxybacillaceae</taxon>
        <taxon>Geobacillus</taxon>
    </lineage>
</organism>
<keyword id="KW-0068">Autocatalytic cleavage</keyword>
<keyword id="KW-0227">DNA damage</keyword>
<keyword id="KW-0234">DNA repair</keyword>
<keyword id="KW-0235">DNA replication</keyword>
<keyword id="KW-0238">DNA-binding</keyword>
<keyword id="KW-0378">Hydrolase</keyword>
<keyword id="KW-0678">Repressor</keyword>
<keyword id="KW-0742">SOS response</keyword>
<keyword id="KW-0804">Transcription</keyword>
<keyword id="KW-0805">Transcription regulation</keyword>
<gene>
    <name evidence="1" type="primary">lexA</name>
    <name type="ordered locus">GTNG_1183</name>
</gene>
<dbReference type="EC" id="3.4.21.88" evidence="1"/>
<dbReference type="EMBL" id="CP000557">
    <property type="protein sequence ID" value="ABO66555.1"/>
    <property type="molecule type" value="Genomic_DNA"/>
</dbReference>
<dbReference type="RefSeq" id="WP_011887187.1">
    <property type="nucleotide sequence ID" value="NC_009328.1"/>
</dbReference>
<dbReference type="SMR" id="A4IMK1"/>
<dbReference type="MEROPS" id="S24.001"/>
<dbReference type="KEGG" id="gtn:GTNG_1183"/>
<dbReference type="eggNOG" id="COG1974">
    <property type="taxonomic scope" value="Bacteria"/>
</dbReference>
<dbReference type="HOGENOM" id="CLU_066192_45_1_9"/>
<dbReference type="Proteomes" id="UP000001578">
    <property type="component" value="Chromosome"/>
</dbReference>
<dbReference type="GO" id="GO:0003677">
    <property type="term" value="F:DNA binding"/>
    <property type="evidence" value="ECO:0007669"/>
    <property type="project" value="UniProtKB-UniRule"/>
</dbReference>
<dbReference type="GO" id="GO:0004252">
    <property type="term" value="F:serine-type endopeptidase activity"/>
    <property type="evidence" value="ECO:0007669"/>
    <property type="project" value="UniProtKB-UniRule"/>
</dbReference>
<dbReference type="GO" id="GO:0006281">
    <property type="term" value="P:DNA repair"/>
    <property type="evidence" value="ECO:0007669"/>
    <property type="project" value="UniProtKB-UniRule"/>
</dbReference>
<dbReference type="GO" id="GO:0006260">
    <property type="term" value="P:DNA replication"/>
    <property type="evidence" value="ECO:0007669"/>
    <property type="project" value="UniProtKB-UniRule"/>
</dbReference>
<dbReference type="GO" id="GO:0045892">
    <property type="term" value="P:negative regulation of DNA-templated transcription"/>
    <property type="evidence" value="ECO:0007669"/>
    <property type="project" value="UniProtKB-UniRule"/>
</dbReference>
<dbReference type="GO" id="GO:0006508">
    <property type="term" value="P:proteolysis"/>
    <property type="evidence" value="ECO:0007669"/>
    <property type="project" value="InterPro"/>
</dbReference>
<dbReference type="GO" id="GO:0009432">
    <property type="term" value="P:SOS response"/>
    <property type="evidence" value="ECO:0007669"/>
    <property type="project" value="UniProtKB-UniRule"/>
</dbReference>
<dbReference type="CDD" id="cd00090">
    <property type="entry name" value="HTH_ARSR"/>
    <property type="match status" value="1"/>
</dbReference>
<dbReference type="CDD" id="cd06529">
    <property type="entry name" value="S24_LexA-like"/>
    <property type="match status" value="1"/>
</dbReference>
<dbReference type="FunFam" id="1.10.10.10:FF:000009">
    <property type="entry name" value="LexA repressor"/>
    <property type="match status" value="1"/>
</dbReference>
<dbReference type="FunFam" id="2.10.109.10:FF:000001">
    <property type="entry name" value="LexA repressor"/>
    <property type="match status" value="1"/>
</dbReference>
<dbReference type="Gene3D" id="2.10.109.10">
    <property type="entry name" value="Umud Fragment, subunit A"/>
    <property type="match status" value="1"/>
</dbReference>
<dbReference type="Gene3D" id="1.10.10.10">
    <property type="entry name" value="Winged helix-like DNA-binding domain superfamily/Winged helix DNA-binding domain"/>
    <property type="match status" value="1"/>
</dbReference>
<dbReference type="HAMAP" id="MF_00015">
    <property type="entry name" value="LexA"/>
    <property type="match status" value="1"/>
</dbReference>
<dbReference type="InterPro" id="IPR011991">
    <property type="entry name" value="ArsR-like_HTH"/>
</dbReference>
<dbReference type="InterPro" id="IPR006200">
    <property type="entry name" value="LexA"/>
</dbReference>
<dbReference type="InterPro" id="IPR039418">
    <property type="entry name" value="LexA-like"/>
</dbReference>
<dbReference type="InterPro" id="IPR036286">
    <property type="entry name" value="LexA/Signal_pep-like_sf"/>
</dbReference>
<dbReference type="InterPro" id="IPR006199">
    <property type="entry name" value="LexA_DNA-bd_dom"/>
</dbReference>
<dbReference type="InterPro" id="IPR050077">
    <property type="entry name" value="LexA_repressor"/>
</dbReference>
<dbReference type="InterPro" id="IPR006197">
    <property type="entry name" value="Peptidase_S24_LexA"/>
</dbReference>
<dbReference type="InterPro" id="IPR015927">
    <property type="entry name" value="Peptidase_S24_S26A/B/C"/>
</dbReference>
<dbReference type="InterPro" id="IPR036388">
    <property type="entry name" value="WH-like_DNA-bd_sf"/>
</dbReference>
<dbReference type="InterPro" id="IPR036390">
    <property type="entry name" value="WH_DNA-bd_sf"/>
</dbReference>
<dbReference type="NCBIfam" id="TIGR00498">
    <property type="entry name" value="lexA"/>
    <property type="match status" value="1"/>
</dbReference>
<dbReference type="PANTHER" id="PTHR33516">
    <property type="entry name" value="LEXA REPRESSOR"/>
    <property type="match status" value="1"/>
</dbReference>
<dbReference type="PANTHER" id="PTHR33516:SF2">
    <property type="entry name" value="LEXA REPRESSOR-RELATED"/>
    <property type="match status" value="1"/>
</dbReference>
<dbReference type="Pfam" id="PF01726">
    <property type="entry name" value="LexA_DNA_bind"/>
    <property type="match status" value="1"/>
</dbReference>
<dbReference type="Pfam" id="PF00717">
    <property type="entry name" value="Peptidase_S24"/>
    <property type="match status" value="1"/>
</dbReference>
<dbReference type="PRINTS" id="PR00726">
    <property type="entry name" value="LEXASERPTASE"/>
</dbReference>
<dbReference type="SUPFAM" id="SSF51306">
    <property type="entry name" value="LexA/Signal peptidase"/>
    <property type="match status" value="1"/>
</dbReference>
<dbReference type="SUPFAM" id="SSF46785">
    <property type="entry name" value="Winged helix' DNA-binding domain"/>
    <property type="match status" value="1"/>
</dbReference>
<accession>A4IMK1</accession>
<name>LEXA_GEOTN</name>
<protein>
    <recommendedName>
        <fullName evidence="1">LexA repressor</fullName>
        <ecNumber evidence="1">3.4.21.88</ecNumber>
    </recommendedName>
</protein>
<proteinExistence type="inferred from homology"/>
<reference key="1">
    <citation type="journal article" date="2007" name="Proc. Natl. Acad. Sci. U.S.A.">
        <title>Genome and proteome of long-chain alkane degrading Geobacillus thermodenitrificans NG80-2 isolated from a deep-subsurface oil reservoir.</title>
        <authorList>
            <person name="Feng L."/>
            <person name="Wang W."/>
            <person name="Cheng J."/>
            <person name="Ren Y."/>
            <person name="Zhao G."/>
            <person name="Gao C."/>
            <person name="Tang Y."/>
            <person name="Liu X."/>
            <person name="Han W."/>
            <person name="Peng X."/>
            <person name="Liu R."/>
            <person name="Wang L."/>
        </authorList>
    </citation>
    <scope>NUCLEOTIDE SEQUENCE [LARGE SCALE GENOMIC DNA]</scope>
    <source>
        <strain>NG80-2</strain>
    </source>
</reference>
<sequence length="207" mass="23240">MTKLSKRQQQILEFIKQEVKTKGYPPSVREIGEAVGLASSSTVHGHLARLESKGYIRRDPTKPRAIEILDSDLTKEREKEEVISVPMIGKVTAGQPITAVENIEDYFPLPKRLAAGEKQLFMLEVMGDSMIEAGILDGDYVIVRQQSSANNGDIVVAMTEENEATVKRFFKEKDHIRLQPENVHLEPIIVRDCTILGKVIGVYRLIN</sequence>
<comment type="function">
    <text evidence="1">Represses a number of genes involved in the response to DNA damage (SOS response), including recA and lexA. In the presence of single-stranded DNA, RecA interacts with LexA causing an autocatalytic cleavage which disrupts the DNA-binding part of LexA, leading to derepression of the SOS regulon and eventually DNA repair.</text>
</comment>
<comment type="catalytic activity">
    <reaction evidence="1">
        <text>Hydrolysis of Ala-|-Gly bond in repressor LexA.</text>
        <dbReference type="EC" id="3.4.21.88"/>
    </reaction>
</comment>
<comment type="subunit">
    <text evidence="1">Homodimer.</text>
</comment>
<comment type="similarity">
    <text evidence="1">Belongs to the peptidase S24 family.</text>
</comment>
<feature type="chain" id="PRO_1000001287" description="LexA repressor">
    <location>
        <begin position="1"/>
        <end position="207"/>
    </location>
</feature>
<feature type="DNA-binding region" description="H-T-H motif" evidence="1">
    <location>
        <begin position="28"/>
        <end position="48"/>
    </location>
</feature>
<feature type="active site" description="For autocatalytic cleavage activity" evidence="1">
    <location>
        <position position="129"/>
    </location>
</feature>
<feature type="active site" description="For autocatalytic cleavage activity" evidence="1">
    <location>
        <position position="167"/>
    </location>
</feature>
<feature type="site" description="Cleavage; by autolysis" evidence="1">
    <location>
        <begin position="93"/>
        <end position="94"/>
    </location>
</feature>
<evidence type="ECO:0000255" key="1">
    <source>
        <dbReference type="HAMAP-Rule" id="MF_00015"/>
    </source>
</evidence>